<reference key="1">
    <citation type="journal article" date="2011" name="Proc. Natl. Acad. Sci. U.S.A.">
        <title>Genomic anatomy of Escherichia coli O157:H7 outbreaks.</title>
        <authorList>
            <person name="Eppinger M."/>
            <person name="Mammel M.K."/>
            <person name="Leclerc J.E."/>
            <person name="Ravel J."/>
            <person name="Cebula T.A."/>
        </authorList>
    </citation>
    <scope>NUCLEOTIDE SEQUENCE [LARGE SCALE GENOMIC DNA]</scope>
    <source>
        <strain>EC4115 / EHEC</strain>
    </source>
</reference>
<protein>
    <recommendedName>
        <fullName evidence="1">Ribosomal protein uS12 methylthiotransferase RimO</fullName>
        <shortName evidence="1">uS12 MTTase</shortName>
        <shortName evidence="1">uS12 methylthiotransferase</shortName>
        <ecNumber evidence="1">2.8.4.4</ecNumber>
    </recommendedName>
    <alternativeName>
        <fullName evidence="1">Ribosomal protein uS12 (aspartate-C(3))-methylthiotransferase</fullName>
    </alternativeName>
    <alternativeName>
        <fullName evidence="1">Ribosome maturation factor RimO</fullName>
    </alternativeName>
</protein>
<accession>B5YSC6</accession>
<evidence type="ECO:0000255" key="1">
    <source>
        <dbReference type="HAMAP-Rule" id="MF_01865"/>
    </source>
</evidence>
<evidence type="ECO:0000255" key="2">
    <source>
        <dbReference type="PROSITE-ProRule" id="PRU01266"/>
    </source>
</evidence>
<sequence>MSKVTPQPKIGFVSLGCPKNLVDSERILTELRTEGYDVVPSYDDADMVIVNTCGFIDSAVQESLEAIGEALNENGKVIVTGCLGAKEDQIREVHPKVLEITGPHSYEQVLEHVHHYVPKPKHNPFLSLVPEQGVKLTPRHYAYLKISEGCNHRCTFCIIPSMRGDLVSRPIGEVLSEAKRLVDAGVKEILVISQDTSAYGVDVKHRTGFHNGEPVKTSMVSLCEQLSKLGIWTRLHYVYPYPHVDDVIPLMAEGKILPYLDIPLQHASPRILKLMKRPGSVDRQLARIKQWREICPELTLRSTFIVGFPGETEEDFQMLLDFLKEARLDRVGCFKYSPVEGADANALPDQVPEEVKEERWNRFMQLQQQISAERLQEKVGREILVIIDEVDEEGAIGRSMADAPEIDGAVYLNGETNVKPGDILRVKVEHADEYDLWGSRV</sequence>
<gene>
    <name evidence="1" type="primary">rimO</name>
    <name type="ordered locus">ECH74115_0988</name>
</gene>
<dbReference type="EC" id="2.8.4.4" evidence="1"/>
<dbReference type="EMBL" id="CP001164">
    <property type="protein sequence ID" value="ACI36118.1"/>
    <property type="molecule type" value="Genomic_DNA"/>
</dbReference>
<dbReference type="RefSeq" id="WP_000049367.1">
    <property type="nucleotide sequence ID" value="NC_011353.1"/>
</dbReference>
<dbReference type="SMR" id="B5YSC6"/>
<dbReference type="GeneID" id="75204700"/>
<dbReference type="KEGG" id="ecf:ECH74115_0988"/>
<dbReference type="HOGENOM" id="CLU_018697_0_0_6"/>
<dbReference type="GO" id="GO:0005829">
    <property type="term" value="C:cytosol"/>
    <property type="evidence" value="ECO:0007669"/>
    <property type="project" value="TreeGrafter"/>
</dbReference>
<dbReference type="GO" id="GO:0051539">
    <property type="term" value="F:4 iron, 4 sulfur cluster binding"/>
    <property type="evidence" value="ECO:0007669"/>
    <property type="project" value="UniProtKB-UniRule"/>
</dbReference>
<dbReference type="GO" id="GO:0035599">
    <property type="term" value="F:aspartic acid methylthiotransferase activity"/>
    <property type="evidence" value="ECO:0007669"/>
    <property type="project" value="TreeGrafter"/>
</dbReference>
<dbReference type="GO" id="GO:0046872">
    <property type="term" value="F:metal ion binding"/>
    <property type="evidence" value="ECO:0007669"/>
    <property type="project" value="UniProtKB-KW"/>
</dbReference>
<dbReference type="GO" id="GO:0103039">
    <property type="term" value="F:protein methylthiotransferase activity"/>
    <property type="evidence" value="ECO:0007669"/>
    <property type="project" value="UniProtKB-EC"/>
</dbReference>
<dbReference type="GO" id="GO:0006400">
    <property type="term" value="P:tRNA modification"/>
    <property type="evidence" value="ECO:0007669"/>
    <property type="project" value="InterPro"/>
</dbReference>
<dbReference type="CDD" id="cd01335">
    <property type="entry name" value="Radical_SAM"/>
    <property type="match status" value="1"/>
</dbReference>
<dbReference type="FunFam" id="2.40.50.140:FF:000060">
    <property type="entry name" value="Ribosomal protein S12 methylthiotransferase RimO"/>
    <property type="match status" value="1"/>
</dbReference>
<dbReference type="FunFam" id="3.40.50.12160:FF:000002">
    <property type="entry name" value="Ribosomal protein S12 methylthiotransferase RimO"/>
    <property type="match status" value="1"/>
</dbReference>
<dbReference type="FunFam" id="3.80.30.20:FF:000001">
    <property type="entry name" value="tRNA-2-methylthio-N(6)-dimethylallyladenosine synthase 2"/>
    <property type="match status" value="1"/>
</dbReference>
<dbReference type="Gene3D" id="3.40.50.12160">
    <property type="entry name" value="Methylthiotransferase, N-terminal domain"/>
    <property type="match status" value="1"/>
</dbReference>
<dbReference type="Gene3D" id="2.40.50.140">
    <property type="entry name" value="Nucleic acid-binding proteins"/>
    <property type="match status" value="1"/>
</dbReference>
<dbReference type="Gene3D" id="3.80.30.20">
    <property type="entry name" value="tm_1862 like domain"/>
    <property type="match status" value="1"/>
</dbReference>
<dbReference type="HAMAP" id="MF_01865">
    <property type="entry name" value="MTTase_RimO"/>
    <property type="match status" value="1"/>
</dbReference>
<dbReference type="InterPro" id="IPR006638">
    <property type="entry name" value="Elp3/MiaA/NifB-like_rSAM"/>
</dbReference>
<dbReference type="InterPro" id="IPR005839">
    <property type="entry name" value="Methylthiotransferase"/>
</dbReference>
<dbReference type="InterPro" id="IPR020612">
    <property type="entry name" value="Methylthiotransferase_CS"/>
</dbReference>
<dbReference type="InterPro" id="IPR013848">
    <property type="entry name" value="Methylthiotransferase_N"/>
</dbReference>
<dbReference type="InterPro" id="IPR038135">
    <property type="entry name" value="Methylthiotransferase_N_sf"/>
</dbReference>
<dbReference type="InterPro" id="IPR012340">
    <property type="entry name" value="NA-bd_OB-fold"/>
</dbReference>
<dbReference type="InterPro" id="IPR005840">
    <property type="entry name" value="Ribosomal_uS12_MeSTrfase_RimO"/>
</dbReference>
<dbReference type="InterPro" id="IPR007197">
    <property type="entry name" value="rSAM"/>
</dbReference>
<dbReference type="InterPro" id="IPR023404">
    <property type="entry name" value="rSAM_horseshoe"/>
</dbReference>
<dbReference type="InterPro" id="IPR002792">
    <property type="entry name" value="TRAM_dom"/>
</dbReference>
<dbReference type="NCBIfam" id="TIGR01125">
    <property type="entry name" value="30S ribosomal protein S12 methylthiotransferase RimO"/>
    <property type="match status" value="1"/>
</dbReference>
<dbReference type="NCBIfam" id="TIGR00089">
    <property type="entry name" value="MiaB/RimO family radical SAM methylthiotransferase"/>
    <property type="match status" value="1"/>
</dbReference>
<dbReference type="PANTHER" id="PTHR43837">
    <property type="entry name" value="RIBOSOMAL PROTEIN S12 METHYLTHIOTRANSFERASE RIMO"/>
    <property type="match status" value="1"/>
</dbReference>
<dbReference type="PANTHER" id="PTHR43837:SF1">
    <property type="entry name" value="RIBOSOMAL PROTEIN US12 METHYLTHIOTRANSFERASE RIMO"/>
    <property type="match status" value="1"/>
</dbReference>
<dbReference type="Pfam" id="PF04055">
    <property type="entry name" value="Radical_SAM"/>
    <property type="match status" value="1"/>
</dbReference>
<dbReference type="Pfam" id="PF18693">
    <property type="entry name" value="TRAM_2"/>
    <property type="match status" value="1"/>
</dbReference>
<dbReference type="Pfam" id="PF00919">
    <property type="entry name" value="UPF0004"/>
    <property type="match status" value="1"/>
</dbReference>
<dbReference type="SFLD" id="SFLDG01082">
    <property type="entry name" value="B12-binding_domain_containing"/>
    <property type="match status" value="1"/>
</dbReference>
<dbReference type="SFLD" id="SFLDS00029">
    <property type="entry name" value="Radical_SAM"/>
    <property type="match status" value="1"/>
</dbReference>
<dbReference type="SFLD" id="SFLDF00274">
    <property type="entry name" value="ribosomal_protein_S12_methylth"/>
    <property type="match status" value="1"/>
</dbReference>
<dbReference type="SMART" id="SM00729">
    <property type="entry name" value="Elp3"/>
    <property type="match status" value="1"/>
</dbReference>
<dbReference type="SUPFAM" id="SSF102114">
    <property type="entry name" value="Radical SAM enzymes"/>
    <property type="match status" value="1"/>
</dbReference>
<dbReference type="PROSITE" id="PS51449">
    <property type="entry name" value="MTTASE_N"/>
    <property type="match status" value="1"/>
</dbReference>
<dbReference type="PROSITE" id="PS01278">
    <property type="entry name" value="MTTASE_RADICAL"/>
    <property type="match status" value="1"/>
</dbReference>
<dbReference type="PROSITE" id="PS51918">
    <property type="entry name" value="RADICAL_SAM"/>
    <property type="match status" value="1"/>
</dbReference>
<dbReference type="PROSITE" id="PS50926">
    <property type="entry name" value="TRAM"/>
    <property type="match status" value="1"/>
</dbReference>
<feature type="chain" id="PRO_0000374823" description="Ribosomal protein uS12 methylthiotransferase RimO">
    <location>
        <begin position="1"/>
        <end position="441"/>
    </location>
</feature>
<feature type="domain" description="MTTase N-terminal" evidence="1">
    <location>
        <begin position="8"/>
        <end position="118"/>
    </location>
</feature>
<feature type="domain" description="Radical SAM core" evidence="2">
    <location>
        <begin position="136"/>
        <end position="373"/>
    </location>
</feature>
<feature type="domain" description="TRAM" evidence="1">
    <location>
        <begin position="376"/>
        <end position="441"/>
    </location>
</feature>
<feature type="binding site" evidence="1">
    <location>
        <position position="17"/>
    </location>
    <ligand>
        <name>[4Fe-4S] cluster</name>
        <dbReference type="ChEBI" id="CHEBI:49883"/>
        <label>1</label>
    </ligand>
</feature>
<feature type="binding site" evidence="1">
    <location>
        <position position="53"/>
    </location>
    <ligand>
        <name>[4Fe-4S] cluster</name>
        <dbReference type="ChEBI" id="CHEBI:49883"/>
        <label>1</label>
    </ligand>
</feature>
<feature type="binding site" evidence="1">
    <location>
        <position position="82"/>
    </location>
    <ligand>
        <name>[4Fe-4S] cluster</name>
        <dbReference type="ChEBI" id="CHEBI:49883"/>
        <label>1</label>
    </ligand>
</feature>
<feature type="binding site" evidence="1">
    <location>
        <position position="150"/>
    </location>
    <ligand>
        <name>[4Fe-4S] cluster</name>
        <dbReference type="ChEBI" id="CHEBI:49883"/>
        <label>2</label>
        <note>4Fe-4S-S-AdoMet</note>
    </ligand>
</feature>
<feature type="binding site" evidence="1">
    <location>
        <position position="154"/>
    </location>
    <ligand>
        <name>[4Fe-4S] cluster</name>
        <dbReference type="ChEBI" id="CHEBI:49883"/>
        <label>2</label>
        <note>4Fe-4S-S-AdoMet</note>
    </ligand>
</feature>
<feature type="binding site" evidence="1">
    <location>
        <position position="157"/>
    </location>
    <ligand>
        <name>[4Fe-4S] cluster</name>
        <dbReference type="ChEBI" id="CHEBI:49883"/>
        <label>2</label>
        <note>4Fe-4S-S-AdoMet</note>
    </ligand>
</feature>
<keyword id="KW-0004">4Fe-4S</keyword>
<keyword id="KW-0963">Cytoplasm</keyword>
<keyword id="KW-0408">Iron</keyword>
<keyword id="KW-0411">Iron-sulfur</keyword>
<keyword id="KW-0479">Metal-binding</keyword>
<keyword id="KW-0949">S-adenosyl-L-methionine</keyword>
<keyword id="KW-0808">Transferase</keyword>
<proteinExistence type="inferred from homology"/>
<comment type="function">
    <text evidence="1">Catalyzes the methylthiolation of an aspartic acid residue of ribosomal protein uS12.</text>
</comment>
<comment type="catalytic activity">
    <reaction evidence="1">
        <text>L-aspartate(89)-[ribosomal protein uS12]-hydrogen + (sulfur carrier)-SH + AH2 + 2 S-adenosyl-L-methionine = 3-methylsulfanyl-L-aspartate(89)-[ribosomal protein uS12]-hydrogen + (sulfur carrier)-H + 5'-deoxyadenosine + L-methionine + A + S-adenosyl-L-homocysteine + 2 H(+)</text>
        <dbReference type="Rhea" id="RHEA:37087"/>
        <dbReference type="Rhea" id="RHEA-COMP:10460"/>
        <dbReference type="Rhea" id="RHEA-COMP:10461"/>
        <dbReference type="Rhea" id="RHEA-COMP:14737"/>
        <dbReference type="Rhea" id="RHEA-COMP:14739"/>
        <dbReference type="ChEBI" id="CHEBI:13193"/>
        <dbReference type="ChEBI" id="CHEBI:15378"/>
        <dbReference type="ChEBI" id="CHEBI:17319"/>
        <dbReference type="ChEBI" id="CHEBI:17499"/>
        <dbReference type="ChEBI" id="CHEBI:29917"/>
        <dbReference type="ChEBI" id="CHEBI:29961"/>
        <dbReference type="ChEBI" id="CHEBI:57844"/>
        <dbReference type="ChEBI" id="CHEBI:57856"/>
        <dbReference type="ChEBI" id="CHEBI:59789"/>
        <dbReference type="ChEBI" id="CHEBI:64428"/>
        <dbReference type="ChEBI" id="CHEBI:73599"/>
        <dbReference type="EC" id="2.8.4.4"/>
    </reaction>
</comment>
<comment type="cofactor">
    <cofactor evidence="1">
        <name>[4Fe-4S] cluster</name>
        <dbReference type="ChEBI" id="CHEBI:49883"/>
    </cofactor>
    <text evidence="1">Binds 2 [4Fe-4S] clusters. One cluster is coordinated with 3 cysteines and an exchangeable S-adenosyl-L-methionine.</text>
</comment>
<comment type="subcellular location">
    <subcellularLocation>
        <location evidence="1">Cytoplasm</location>
    </subcellularLocation>
</comment>
<comment type="similarity">
    <text evidence="1">Belongs to the methylthiotransferase family. RimO subfamily.</text>
</comment>
<name>RIMO_ECO5E</name>
<organism>
    <name type="scientific">Escherichia coli O157:H7 (strain EC4115 / EHEC)</name>
    <dbReference type="NCBI Taxonomy" id="444450"/>
    <lineage>
        <taxon>Bacteria</taxon>
        <taxon>Pseudomonadati</taxon>
        <taxon>Pseudomonadota</taxon>
        <taxon>Gammaproteobacteria</taxon>
        <taxon>Enterobacterales</taxon>
        <taxon>Enterobacteriaceae</taxon>
        <taxon>Escherichia</taxon>
    </lineage>
</organism>